<protein>
    <recommendedName>
        <fullName evidence="1">tRNA-specific 2-thiouridylase MnmA</fullName>
        <ecNumber evidence="1">2.8.1.13</ecNumber>
    </recommendedName>
</protein>
<sequence>MKAKVIVGMSGGVDSSVAAWLLKEQGYQVEGLFMKNWEQDDHNDYCPAAKDLADAQAVCNQLRIPLHTVNFSKEYWDRVFAYFLSEYEKGRTPNPDVLCNKEIKFNAFLNHALTLGADYIATGHYAKNTIEGSIGYLFKAKDREKDQTYFLHAVEPEALSKTIFPIGDFTKPQIREFAKQLGLVTHAKKDSTGICFIGEKRFKTFLNEFILAKPGEIKSTGGKTLGQHDGLMFYTLGQRQGLGIGGLQNSTDEPWYVVDKDIASNTLYVAQGSQHPMLYSQGLICGPIHWLADYENHLPLTCFAKTRYRQTDQACMISPPDNNQHYVMFSSPQRAITPGQFIVFYEKNQCLGGATIEQIIR</sequence>
<name>MNMA_LEGPH</name>
<evidence type="ECO:0000255" key="1">
    <source>
        <dbReference type="HAMAP-Rule" id="MF_00144"/>
    </source>
</evidence>
<gene>
    <name evidence="1" type="primary">mnmA</name>
    <name type="ordered locus">lpg1389</name>
</gene>
<accession>Q5ZVQ1</accession>
<reference key="1">
    <citation type="journal article" date="2004" name="Science">
        <title>The genomic sequence of the accidental pathogen Legionella pneumophila.</title>
        <authorList>
            <person name="Chien M."/>
            <person name="Morozova I."/>
            <person name="Shi S."/>
            <person name="Sheng H."/>
            <person name="Chen J."/>
            <person name="Gomez S.M."/>
            <person name="Asamani G."/>
            <person name="Hill K."/>
            <person name="Nuara J."/>
            <person name="Feder M."/>
            <person name="Rineer J."/>
            <person name="Greenberg J.J."/>
            <person name="Steshenko V."/>
            <person name="Park S.H."/>
            <person name="Zhao B."/>
            <person name="Teplitskaya E."/>
            <person name="Edwards J.R."/>
            <person name="Pampou S."/>
            <person name="Georghiou A."/>
            <person name="Chou I.-C."/>
            <person name="Iannuccilli W."/>
            <person name="Ulz M.E."/>
            <person name="Kim D.H."/>
            <person name="Geringer-Sameth A."/>
            <person name="Goldsberry C."/>
            <person name="Morozov P."/>
            <person name="Fischer S.G."/>
            <person name="Segal G."/>
            <person name="Qu X."/>
            <person name="Rzhetsky A."/>
            <person name="Zhang P."/>
            <person name="Cayanis E."/>
            <person name="De Jong P.J."/>
            <person name="Ju J."/>
            <person name="Kalachikov S."/>
            <person name="Shuman H.A."/>
            <person name="Russo J.J."/>
        </authorList>
    </citation>
    <scope>NUCLEOTIDE SEQUENCE [LARGE SCALE GENOMIC DNA]</scope>
    <source>
        <strain>Philadelphia 1 / ATCC 33152 / DSM 7513</strain>
    </source>
</reference>
<feature type="chain" id="PRO_0000349681" description="tRNA-specific 2-thiouridylase MnmA">
    <location>
        <begin position="1"/>
        <end position="361"/>
    </location>
</feature>
<feature type="region of interest" description="Interaction with target base in tRNA" evidence="1">
    <location>
        <begin position="94"/>
        <end position="96"/>
    </location>
</feature>
<feature type="region of interest" description="Interaction with tRNA" evidence="1">
    <location>
        <begin position="145"/>
        <end position="147"/>
    </location>
</feature>
<feature type="region of interest" description="Interaction with tRNA" evidence="1">
    <location>
        <begin position="307"/>
        <end position="308"/>
    </location>
</feature>
<feature type="active site" description="Nucleophile" evidence="1">
    <location>
        <position position="99"/>
    </location>
</feature>
<feature type="active site" description="Cysteine persulfide intermediate" evidence="1">
    <location>
        <position position="195"/>
    </location>
</feature>
<feature type="binding site" evidence="1">
    <location>
        <begin position="8"/>
        <end position="15"/>
    </location>
    <ligand>
        <name>ATP</name>
        <dbReference type="ChEBI" id="CHEBI:30616"/>
    </ligand>
</feature>
<feature type="binding site" evidence="1">
    <location>
        <position position="34"/>
    </location>
    <ligand>
        <name>ATP</name>
        <dbReference type="ChEBI" id="CHEBI:30616"/>
    </ligand>
</feature>
<feature type="binding site" evidence="1">
    <location>
        <position position="123"/>
    </location>
    <ligand>
        <name>ATP</name>
        <dbReference type="ChEBI" id="CHEBI:30616"/>
    </ligand>
</feature>
<feature type="site" description="Interaction with tRNA" evidence="1">
    <location>
        <position position="124"/>
    </location>
</feature>
<feature type="site" description="Interaction with tRNA" evidence="1">
    <location>
        <position position="340"/>
    </location>
</feature>
<feature type="disulfide bond" description="Alternate" evidence="1">
    <location>
        <begin position="99"/>
        <end position="195"/>
    </location>
</feature>
<keyword id="KW-0067">ATP-binding</keyword>
<keyword id="KW-0963">Cytoplasm</keyword>
<keyword id="KW-1015">Disulfide bond</keyword>
<keyword id="KW-0547">Nucleotide-binding</keyword>
<keyword id="KW-1185">Reference proteome</keyword>
<keyword id="KW-0694">RNA-binding</keyword>
<keyword id="KW-0808">Transferase</keyword>
<keyword id="KW-0819">tRNA processing</keyword>
<keyword id="KW-0820">tRNA-binding</keyword>
<comment type="function">
    <text evidence="1">Catalyzes the 2-thiolation of uridine at the wobble position (U34) of tRNA, leading to the formation of s(2)U34.</text>
</comment>
<comment type="catalytic activity">
    <reaction evidence="1">
        <text>S-sulfanyl-L-cysteinyl-[protein] + uridine(34) in tRNA + AH2 + ATP = 2-thiouridine(34) in tRNA + L-cysteinyl-[protein] + A + AMP + diphosphate + H(+)</text>
        <dbReference type="Rhea" id="RHEA:47032"/>
        <dbReference type="Rhea" id="RHEA-COMP:10131"/>
        <dbReference type="Rhea" id="RHEA-COMP:11726"/>
        <dbReference type="Rhea" id="RHEA-COMP:11727"/>
        <dbReference type="Rhea" id="RHEA-COMP:11728"/>
        <dbReference type="ChEBI" id="CHEBI:13193"/>
        <dbReference type="ChEBI" id="CHEBI:15378"/>
        <dbReference type="ChEBI" id="CHEBI:17499"/>
        <dbReference type="ChEBI" id="CHEBI:29950"/>
        <dbReference type="ChEBI" id="CHEBI:30616"/>
        <dbReference type="ChEBI" id="CHEBI:33019"/>
        <dbReference type="ChEBI" id="CHEBI:61963"/>
        <dbReference type="ChEBI" id="CHEBI:65315"/>
        <dbReference type="ChEBI" id="CHEBI:87170"/>
        <dbReference type="ChEBI" id="CHEBI:456215"/>
        <dbReference type="EC" id="2.8.1.13"/>
    </reaction>
</comment>
<comment type="subcellular location">
    <subcellularLocation>
        <location evidence="1">Cytoplasm</location>
    </subcellularLocation>
</comment>
<comment type="similarity">
    <text evidence="1">Belongs to the MnmA/TRMU family.</text>
</comment>
<proteinExistence type="inferred from homology"/>
<organism>
    <name type="scientific">Legionella pneumophila subsp. pneumophila (strain Philadelphia 1 / ATCC 33152 / DSM 7513)</name>
    <dbReference type="NCBI Taxonomy" id="272624"/>
    <lineage>
        <taxon>Bacteria</taxon>
        <taxon>Pseudomonadati</taxon>
        <taxon>Pseudomonadota</taxon>
        <taxon>Gammaproteobacteria</taxon>
        <taxon>Legionellales</taxon>
        <taxon>Legionellaceae</taxon>
        <taxon>Legionella</taxon>
    </lineage>
</organism>
<dbReference type="EC" id="2.8.1.13" evidence="1"/>
<dbReference type="EMBL" id="AE017354">
    <property type="protein sequence ID" value="AAU27471.1"/>
    <property type="molecule type" value="Genomic_DNA"/>
</dbReference>
<dbReference type="RefSeq" id="WP_010947119.1">
    <property type="nucleotide sequence ID" value="NC_002942.5"/>
</dbReference>
<dbReference type="RefSeq" id="YP_095418.1">
    <property type="nucleotide sequence ID" value="NC_002942.5"/>
</dbReference>
<dbReference type="SMR" id="Q5ZVQ1"/>
<dbReference type="STRING" id="272624.lpg1389"/>
<dbReference type="PaxDb" id="272624-lpg1389"/>
<dbReference type="GeneID" id="57035379"/>
<dbReference type="KEGG" id="lpn:lpg1389"/>
<dbReference type="PATRIC" id="fig|272624.6.peg.1459"/>
<dbReference type="eggNOG" id="COG0482">
    <property type="taxonomic scope" value="Bacteria"/>
</dbReference>
<dbReference type="HOGENOM" id="CLU_035188_1_0_6"/>
<dbReference type="OrthoDB" id="9800696at2"/>
<dbReference type="Proteomes" id="UP000000609">
    <property type="component" value="Chromosome"/>
</dbReference>
<dbReference type="GO" id="GO:0005737">
    <property type="term" value="C:cytoplasm"/>
    <property type="evidence" value="ECO:0007669"/>
    <property type="project" value="UniProtKB-SubCell"/>
</dbReference>
<dbReference type="GO" id="GO:0005524">
    <property type="term" value="F:ATP binding"/>
    <property type="evidence" value="ECO:0007669"/>
    <property type="project" value="UniProtKB-KW"/>
</dbReference>
<dbReference type="GO" id="GO:0000049">
    <property type="term" value="F:tRNA binding"/>
    <property type="evidence" value="ECO:0007669"/>
    <property type="project" value="UniProtKB-KW"/>
</dbReference>
<dbReference type="GO" id="GO:0103016">
    <property type="term" value="F:tRNA-uridine 2-sulfurtransferase activity"/>
    <property type="evidence" value="ECO:0007669"/>
    <property type="project" value="UniProtKB-EC"/>
</dbReference>
<dbReference type="GO" id="GO:0002143">
    <property type="term" value="P:tRNA wobble position uridine thiolation"/>
    <property type="evidence" value="ECO:0007669"/>
    <property type="project" value="TreeGrafter"/>
</dbReference>
<dbReference type="CDD" id="cd01998">
    <property type="entry name" value="MnmA_TRMU-like"/>
    <property type="match status" value="1"/>
</dbReference>
<dbReference type="FunFam" id="2.30.30.280:FF:000001">
    <property type="entry name" value="tRNA-specific 2-thiouridylase MnmA"/>
    <property type="match status" value="1"/>
</dbReference>
<dbReference type="FunFam" id="2.40.30.10:FF:000023">
    <property type="entry name" value="tRNA-specific 2-thiouridylase MnmA"/>
    <property type="match status" value="1"/>
</dbReference>
<dbReference type="FunFam" id="3.40.50.620:FF:000004">
    <property type="entry name" value="tRNA-specific 2-thiouridylase MnmA"/>
    <property type="match status" value="1"/>
</dbReference>
<dbReference type="Gene3D" id="2.30.30.280">
    <property type="entry name" value="Adenine nucleotide alpha hydrolases-like domains"/>
    <property type="match status" value="1"/>
</dbReference>
<dbReference type="Gene3D" id="3.40.50.620">
    <property type="entry name" value="HUPs"/>
    <property type="match status" value="1"/>
</dbReference>
<dbReference type="Gene3D" id="2.40.30.10">
    <property type="entry name" value="Translation factors"/>
    <property type="match status" value="1"/>
</dbReference>
<dbReference type="HAMAP" id="MF_00144">
    <property type="entry name" value="tRNA_thiouridyl_MnmA"/>
    <property type="match status" value="1"/>
</dbReference>
<dbReference type="InterPro" id="IPR004506">
    <property type="entry name" value="MnmA-like"/>
</dbReference>
<dbReference type="InterPro" id="IPR046885">
    <property type="entry name" value="MnmA-like_C"/>
</dbReference>
<dbReference type="InterPro" id="IPR046884">
    <property type="entry name" value="MnmA-like_central"/>
</dbReference>
<dbReference type="InterPro" id="IPR023382">
    <property type="entry name" value="MnmA-like_central_sf"/>
</dbReference>
<dbReference type="InterPro" id="IPR014729">
    <property type="entry name" value="Rossmann-like_a/b/a_fold"/>
</dbReference>
<dbReference type="NCBIfam" id="NF001138">
    <property type="entry name" value="PRK00143.1"/>
    <property type="match status" value="1"/>
</dbReference>
<dbReference type="NCBIfam" id="TIGR00420">
    <property type="entry name" value="trmU"/>
    <property type="match status" value="1"/>
</dbReference>
<dbReference type="PANTHER" id="PTHR11933:SF5">
    <property type="entry name" value="MITOCHONDRIAL TRNA-SPECIFIC 2-THIOURIDYLASE 1"/>
    <property type="match status" value="1"/>
</dbReference>
<dbReference type="PANTHER" id="PTHR11933">
    <property type="entry name" value="TRNA 5-METHYLAMINOMETHYL-2-THIOURIDYLATE -METHYLTRANSFERASE"/>
    <property type="match status" value="1"/>
</dbReference>
<dbReference type="Pfam" id="PF03054">
    <property type="entry name" value="tRNA_Me_trans"/>
    <property type="match status" value="1"/>
</dbReference>
<dbReference type="Pfam" id="PF20258">
    <property type="entry name" value="tRNA_Me_trans_C"/>
    <property type="match status" value="1"/>
</dbReference>
<dbReference type="Pfam" id="PF20259">
    <property type="entry name" value="tRNA_Me_trans_M"/>
    <property type="match status" value="1"/>
</dbReference>
<dbReference type="SUPFAM" id="SSF52402">
    <property type="entry name" value="Adenine nucleotide alpha hydrolases-like"/>
    <property type="match status" value="1"/>
</dbReference>